<feature type="chain" id="PRO_1000131199" description="Coenzyme PQQ synthesis protein A">
    <location>
        <begin position="1"/>
        <end position="29"/>
    </location>
</feature>
<feature type="cross-link" description="Pyrroloquinoline quinone (Glu-Tyr)" evidence="1">
    <location>
        <begin position="16"/>
        <end position="20"/>
    </location>
</feature>
<comment type="function">
    <text evidence="1">Required for coenzyme pyrroloquinoline quinone (PQQ) biosynthesis. PQQ is probably formed by cross-linking a specific glutamate to a specific tyrosine residue and excising these residues from the peptide.</text>
</comment>
<comment type="pathway">
    <text evidence="1">Cofactor biosynthesis; pyrroloquinoline quinone biosynthesis.</text>
</comment>
<comment type="similarity">
    <text evidence="1">Belongs to the PqqA family.</text>
</comment>
<gene>
    <name evidence="1" type="primary">pqqA</name>
    <name type="ordered locus">Mrad2831_0519</name>
</gene>
<organism>
    <name type="scientific">Methylobacterium radiotolerans (strain ATCC 27329 / DSM 1819 / JCM 2831 / NBRC 15690 / NCIMB 10815 / 0-1)</name>
    <dbReference type="NCBI Taxonomy" id="426355"/>
    <lineage>
        <taxon>Bacteria</taxon>
        <taxon>Pseudomonadati</taxon>
        <taxon>Pseudomonadota</taxon>
        <taxon>Alphaproteobacteria</taxon>
        <taxon>Hyphomicrobiales</taxon>
        <taxon>Methylobacteriaceae</taxon>
        <taxon>Methylobacterium</taxon>
    </lineage>
</organism>
<protein>
    <recommendedName>
        <fullName evidence="1">Coenzyme PQQ synthesis protein A</fullName>
    </recommendedName>
    <alternativeName>
        <fullName evidence="1">Pyrroloquinoline quinone biosynthesis protein A</fullName>
    </alternativeName>
</protein>
<reference key="1">
    <citation type="submission" date="2008-03" db="EMBL/GenBank/DDBJ databases">
        <title>Complete sequence of chromosome of Methylobacterium radiotolerans JCM 2831.</title>
        <authorList>
            <consortium name="US DOE Joint Genome Institute"/>
            <person name="Copeland A."/>
            <person name="Lucas S."/>
            <person name="Lapidus A."/>
            <person name="Glavina del Rio T."/>
            <person name="Dalin E."/>
            <person name="Tice H."/>
            <person name="Bruce D."/>
            <person name="Goodwin L."/>
            <person name="Pitluck S."/>
            <person name="Kiss H."/>
            <person name="Brettin T."/>
            <person name="Detter J.C."/>
            <person name="Han C."/>
            <person name="Kuske C.R."/>
            <person name="Schmutz J."/>
            <person name="Larimer F."/>
            <person name="Land M."/>
            <person name="Hauser L."/>
            <person name="Kyrpides N."/>
            <person name="Mikhailova N."/>
            <person name="Marx C.J."/>
            <person name="Richardson P."/>
        </authorList>
    </citation>
    <scope>NUCLEOTIDE SEQUENCE [LARGE SCALE GENOMIC DNA]</scope>
    <source>
        <strain>ATCC 27329 / DSM 1819 / JCM 2831 / NBRC 15690 / NCIMB 10815 / 0-1</strain>
    </source>
</reference>
<proteinExistence type="inferred from homology"/>
<accession>B1LV85</accession>
<name>PQQA_METRJ</name>
<keyword id="KW-0884">PQQ biosynthesis</keyword>
<sequence>MKWAAPIVSEICVGMEVTSYESAEIDTFN</sequence>
<dbReference type="EMBL" id="CP001001">
    <property type="protein sequence ID" value="ACB22530.1"/>
    <property type="molecule type" value="Genomic_DNA"/>
</dbReference>
<dbReference type="RefSeq" id="WP_012317526.1">
    <property type="nucleotide sequence ID" value="NC_010505.1"/>
</dbReference>
<dbReference type="STRING" id="426355.Mrad2831_0519"/>
<dbReference type="GeneID" id="96604092"/>
<dbReference type="KEGG" id="mrd:Mrad2831_0519"/>
<dbReference type="eggNOG" id="ENOG503054D">
    <property type="taxonomic scope" value="Bacteria"/>
</dbReference>
<dbReference type="HOGENOM" id="CLU_219399_0_1_5"/>
<dbReference type="UniPathway" id="UPA00539"/>
<dbReference type="Proteomes" id="UP000006589">
    <property type="component" value="Chromosome"/>
</dbReference>
<dbReference type="GO" id="GO:0018189">
    <property type="term" value="P:pyrroloquinoline quinone biosynthetic process"/>
    <property type="evidence" value="ECO:0007669"/>
    <property type="project" value="UniProtKB-UniRule"/>
</dbReference>
<dbReference type="HAMAP" id="MF_00656">
    <property type="entry name" value="PQQ_syn_PqqA"/>
    <property type="match status" value="1"/>
</dbReference>
<dbReference type="InterPro" id="IPR011725">
    <property type="entry name" value="PQQ_synth_PqqA"/>
</dbReference>
<dbReference type="NCBIfam" id="TIGR02107">
    <property type="entry name" value="PQQ_syn_pqqA"/>
    <property type="match status" value="1"/>
</dbReference>
<dbReference type="Pfam" id="PF08042">
    <property type="entry name" value="PqqA"/>
    <property type="match status" value="1"/>
</dbReference>
<evidence type="ECO:0000255" key="1">
    <source>
        <dbReference type="HAMAP-Rule" id="MF_00656"/>
    </source>
</evidence>